<gene>
    <name evidence="1" type="primary">groES</name>
    <name evidence="1" type="synonym">groS</name>
    <name type="ordered locus">Lm4b_02090</name>
</gene>
<feature type="chain" id="PRO_1000212120" description="Co-chaperonin GroES">
    <location>
        <begin position="1"/>
        <end position="94"/>
    </location>
</feature>
<reference key="1">
    <citation type="journal article" date="2012" name="BMC Genomics">
        <title>Comparative genomics and transcriptomics of lineages I, II, and III strains of Listeria monocytogenes.</title>
        <authorList>
            <person name="Hain T."/>
            <person name="Ghai R."/>
            <person name="Billion A."/>
            <person name="Kuenne C.T."/>
            <person name="Steinweg C."/>
            <person name="Izar B."/>
            <person name="Mohamed W."/>
            <person name="Mraheil M."/>
            <person name="Domann E."/>
            <person name="Schaffrath S."/>
            <person name="Karst U."/>
            <person name="Goesmann A."/>
            <person name="Oehm S."/>
            <person name="Puhler A."/>
            <person name="Merkl R."/>
            <person name="Vorwerk S."/>
            <person name="Glaser P."/>
            <person name="Garrido P."/>
            <person name="Rusniok C."/>
            <person name="Buchrieser C."/>
            <person name="Goebel W."/>
            <person name="Chakraborty T."/>
        </authorList>
    </citation>
    <scope>NUCLEOTIDE SEQUENCE [LARGE SCALE GENOMIC DNA]</scope>
    <source>
        <strain>CLIP80459</strain>
    </source>
</reference>
<sequence length="94" mass="10064">MLKPLGDRVVIEVLEAEEKTASGIVLPDSAKEKPQSGKIVAVGSGRVLDNGTKEPLEVAEGDTVIFAKYSGTEVTYEGTDYLILRESDILAITK</sequence>
<accession>C1KX22</accession>
<organism>
    <name type="scientific">Listeria monocytogenes serotype 4b (strain CLIP80459)</name>
    <dbReference type="NCBI Taxonomy" id="568819"/>
    <lineage>
        <taxon>Bacteria</taxon>
        <taxon>Bacillati</taxon>
        <taxon>Bacillota</taxon>
        <taxon>Bacilli</taxon>
        <taxon>Bacillales</taxon>
        <taxon>Listeriaceae</taxon>
        <taxon>Listeria</taxon>
    </lineage>
</organism>
<name>CH10_LISMC</name>
<evidence type="ECO:0000255" key="1">
    <source>
        <dbReference type="HAMAP-Rule" id="MF_00580"/>
    </source>
</evidence>
<proteinExistence type="inferred from homology"/>
<comment type="function">
    <text evidence="1">Together with the chaperonin GroEL, plays an essential role in assisting protein folding. The GroEL-GroES system forms a nano-cage that allows encapsulation of the non-native substrate proteins and provides a physical environment optimized to promote and accelerate protein folding. GroES binds to the apical surface of the GroEL ring, thereby capping the opening of the GroEL channel.</text>
</comment>
<comment type="subunit">
    <text evidence="1">Heptamer of 7 subunits arranged in a ring. Interacts with the chaperonin GroEL.</text>
</comment>
<comment type="subcellular location">
    <subcellularLocation>
        <location evidence="1">Cytoplasm</location>
    </subcellularLocation>
</comment>
<comment type="similarity">
    <text evidence="1">Belongs to the GroES chaperonin family.</text>
</comment>
<dbReference type="EMBL" id="FM242711">
    <property type="protein sequence ID" value="CAS05849.1"/>
    <property type="molecule type" value="Genomic_DNA"/>
</dbReference>
<dbReference type="RefSeq" id="WP_003726504.1">
    <property type="nucleotide sequence ID" value="NC_012488.1"/>
</dbReference>
<dbReference type="SMR" id="C1KX22"/>
<dbReference type="GeneID" id="93235513"/>
<dbReference type="KEGG" id="lmc:Lm4b_02090"/>
<dbReference type="HOGENOM" id="CLU_132825_2_0_9"/>
<dbReference type="GO" id="GO:0005737">
    <property type="term" value="C:cytoplasm"/>
    <property type="evidence" value="ECO:0007669"/>
    <property type="project" value="UniProtKB-SubCell"/>
</dbReference>
<dbReference type="GO" id="GO:0005524">
    <property type="term" value="F:ATP binding"/>
    <property type="evidence" value="ECO:0007669"/>
    <property type="project" value="InterPro"/>
</dbReference>
<dbReference type="GO" id="GO:0046872">
    <property type="term" value="F:metal ion binding"/>
    <property type="evidence" value="ECO:0007669"/>
    <property type="project" value="TreeGrafter"/>
</dbReference>
<dbReference type="GO" id="GO:0044183">
    <property type="term" value="F:protein folding chaperone"/>
    <property type="evidence" value="ECO:0007669"/>
    <property type="project" value="InterPro"/>
</dbReference>
<dbReference type="GO" id="GO:0051087">
    <property type="term" value="F:protein-folding chaperone binding"/>
    <property type="evidence" value="ECO:0007669"/>
    <property type="project" value="TreeGrafter"/>
</dbReference>
<dbReference type="GO" id="GO:0051082">
    <property type="term" value="F:unfolded protein binding"/>
    <property type="evidence" value="ECO:0007669"/>
    <property type="project" value="TreeGrafter"/>
</dbReference>
<dbReference type="GO" id="GO:0051085">
    <property type="term" value="P:chaperone cofactor-dependent protein refolding"/>
    <property type="evidence" value="ECO:0007669"/>
    <property type="project" value="TreeGrafter"/>
</dbReference>
<dbReference type="CDD" id="cd00320">
    <property type="entry name" value="cpn10"/>
    <property type="match status" value="1"/>
</dbReference>
<dbReference type="FunFam" id="2.30.33.40:FF:000001">
    <property type="entry name" value="10 kDa chaperonin"/>
    <property type="match status" value="1"/>
</dbReference>
<dbReference type="Gene3D" id="2.30.33.40">
    <property type="entry name" value="GroES chaperonin"/>
    <property type="match status" value="1"/>
</dbReference>
<dbReference type="HAMAP" id="MF_00580">
    <property type="entry name" value="CH10"/>
    <property type="match status" value="1"/>
</dbReference>
<dbReference type="InterPro" id="IPR020818">
    <property type="entry name" value="Chaperonin_GroES"/>
</dbReference>
<dbReference type="InterPro" id="IPR037124">
    <property type="entry name" value="Chaperonin_GroES_sf"/>
</dbReference>
<dbReference type="InterPro" id="IPR018369">
    <property type="entry name" value="Chaprnonin_Cpn10_CS"/>
</dbReference>
<dbReference type="InterPro" id="IPR011032">
    <property type="entry name" value="GroES-like_sf"/>
</dbReference>
<dbReference type="NCBIfam" id="NF001530">
    <property type="entry name" value="PRK00364.1-6"/>
    <property type="match status" value="1"/>
</dbReference>
<dbReference type="NCBIfam" id="NF001531">
    <property type="entry name" value="PRK00364.2-2"/>
    <property type="match status" value="1"/>
</dbReference>
<dbReference type="NCBIfam" id="NF001533">
    <property type="entry name" value="PRK00364.2-4"/>
    <property type="match status" value="1"/>
</dbReference>
<dbReference type="NCBIfam" id="NF001534">
    <property type="entry name" value="PRK00364.2-5"/>
    <property type="match status" value="1"/>
</dbReference>
<dbReference type="PANTHER" id="PTHR10772">
    <property type="entry name" value="10 KDA HEAT SHOCK PROTEIN"/>
    <property type="match status" value="1"/>
</dbReference>
<dbReference type="PANTHER" id="PTHR10772:SF58">
    <property type="entry name" value="CO-CHAPERONIN GROES"/>
    <property type="match status" value="1"/>
</dbReference>
<dbReference type="Pfam" id="PF00166">
    <property type="entry name" value="Cpn10"/>
    <property type="match status" value="1"/>
</dbReference>
<dbReference type="PRINTS" id="PR00297">
    <property type="entry name" value="CHAPERONIN10"/>
</dbReference>
<dbReference type="SMART" id="SM00883">
    <property type="entry name" value="Cpn10"/>
    <property type="match status" value="1"/>
</dbReference>
<dbReference type="SUPFAM" id="SSF50129">
    <property type="entry name" value="GroES-like"/>
    <property type="match status" value="1"/>
</dbReference>
<dbReference type="PROSITE" id="PS00681">
    <property type="entry name" value="CHAPERONINS_CPN10"/>
    <property type="match status" value="1"/>
</dbReference>
<protein>
    <recommendedName>
        <fullName evidence="1">Co-chaperonin GroES</fullName>
    </recommendedName>
    <alternativeName>
        <fullName evidence="1">10 kDa chaperonin</fullName>
    </alternativeName>
    <alternativeName>
        <fullName evidence="1">Chaperonin-10</fullName>
        <shortName evidence="1">Cpn10</shortName>
    </alternativeName>
</protein>
<keyword id="KW-0143">Chaperone</keyword>
<keyword id="KW-0963">Cytoplasm</keyword>